<accession>A8A4A6</accession>
<comment type="function">
    <text evidence="1">Murein-degrading enzyme. May play a role in recycling of muropeptides during cell elongation and/or cell division.</text>
</comment>
<comment type="catalytic activity">
    <reaction evidence="1">
        <text>Exolytic cleavage of the (1-&gt;4)-beta-glycosidic linkage between N-acetylmuramic acid (MurNAc) and N-acetylglucosamine (GlcNAc) residues in peptidoglycan, from either the reducing or the non-reducing ends of the peptidoglycan chains, with concomitant formation of a 1,6-anhydrobond in the MurNAc residue.</text>
        <dbReference type="EC" id="4.2.2.n1"/>
    </reaction>
</comment>
<comment type="subcellular location">
    <subcellularLocation>
        <location evidence="1">Cell outer membrane</location>
        <topology evidence="1">Lipid-anchor</topology>
    </subcellularLocation>
</comment>
<comment type="similarity">
    <text evidence="1">Belongs to the transglycosylase Slt family.</text>
</comment>
<sequence>MKKYLALALIAPLLISCSTTKKGDTYNEAWVKDTNGFDILMGQFAHNIENIWGFKEVVIAGPKDYVKYTDQYQTRSHINFDDGTITIETIAGTEPAAHLRRAIIKTLLMGDDPSSVDLYSDVDDITISKEPFLYGQVVDNTGQPIRWEGRASNFADYLLKNRLQSRSNGLRIIYSVTINMVPNHLDKRAHKYLGMVRQASRKYGVDESLILAIMQTESSFNPYAVSRSDALGLMQVVQHTAGKDVFRSQGKSGTPSRSFLFDPASNIDTGTAYLAMLNNVYLGGIDNPTSRRYAVITAYNGGAGSVLRVFSNDKIQAANIINTMTPGDVYQTLTTRHPSAESRRYLYKVNTAQKSYRRR</sequence>
<proteinExistence type="inferred from homology"/>
<protein>
    <recommendedName>
        <fullName evidence="1">Membrane-bound lytic murein transglycosylase C</fullName>
        <ecNumber evidence="1">4.2.2.n1</ecNumber>
    </recommendedName>
    <alternativeName>
        <fullName evidence="1">Murein lyase C</fullName>
    </alternativeName>
</protein>
<dbReference type="EC" id="4.2.2.n1" evidence="1"/>
<dbReference type="EMBL" id="CP000802">
    <property type="protein sequence ID" value="ABV07360.1"/>
    <property type="molecule type" value="Genomic_DNA"/>
</dbReference>
<dbReference type="RefSeq" id="WP_001298916.1">
    <property type="nucleotide sequence ID" value="NC_009800.1"/>
</dbReference>
<dbReference type="SMR" id="A8A4A6"/>
<dbReference type="CAZy" id="GH23">
    <property type="family name" value="Glycoside Hydrolase Family 23"/>
</dbReference>
<dbReference type="GeneID" id="93779028"/>
<dbReference type="KEGG" id="ecx:EcHS_A3124"/>
<dbReference type="HOGENOM" id="CLU_044583_0_0_6"/>
<dbReference type="GO" id="GO:0009279">
    <property type="term" value="C:cell outer membrane"/>
    <property type="evidence" value="ECO:0007669"/>
    <property type="project" value="UniProtKB-SubCell"/>
</dbReference>
<dbReference type="GO" id="GO:0016798">
    <property type="term" value="F:hydrolase activity, acting on glycosyl bonds"/>
    <property type="evidence" value="ECO:0007669"/>
    <property type="project" value="InterPro"/>
</dbReference>
<dbReference type="GO" id="GO:0008933">
    <property type="term" value="F:peptidoglycan lytic transglycosylase activity"/>
    <property type="evidence" value="ECO:0007669"/>
    <property type="project" value="UniProtKB-UniRule"/>
</dbReference>
<dbReference type="GO" id="GO:0016998">
    <property type="term" value="P:cell wall macromolecule catabolic process"/>
    <property type="evidence" value="ECO:0007669"/>
    <property type="project" value="UniProtKB-UniRule"/>
</dbReference>
<dbReference type="GO" id="GO:0071555">
    <property type="term" value="P:cell wall organization"/>
    <property type="evidence" value="ECO:0007669"/>
    <property type="project" value="UniProtKB-KW"/>
</dbReference>
<dbReference type="GO" id="GO:0000270">
    <property type="term" value="P:peptidoglycan metabolic process"/>
    <property type="evidence" value="ECO:0007669"/>
    <property type="project" value="InterPro"/>
</dbReference>
<dbReference type="CDD" id="cd16893">
    <property type="entry name" value="LT_MltC_MltE"/>
    <property type="match status" value="1"/>
</dbReference>
<dbReference type="FunFam" id="1.10.530.10:FF:000002">
    <property type="entry name" value="Membrane-bound lytic murein transglycosylase C"/>
    <property type="match status" value="1"/>
</dbReference>
<dbReference type="Gene3D" id="1.10.530.10">
    <property type="match status" value="1"/>
</dbReference>
<dbReference type="HAMAP" id="MF_01616">
    <property type="entry name" value="MltC"/>
    <property type="match status" value="1"/>
</dbReference>
<dbReference type="InterPro" id="IPR023346">
    <property type="entry name" value="Lysozyme-like_dom_sf"/>
</dbReference>
<dbReference type="InterPro" id="IPR023664">
    <property type="entry name" value="Murein_transglycosylaseC"/>
</dbReference>
<dbReference type="InterPro" id="IPR024570">
    <property type="entry name" value="Murein_transglycosylaseC_N"/>
</dbReference>
<dbReference type="InterPro" id="IPR000189">
    <property type="entry name" value="Transglyc_AS"/>
</dbReference>
<dbReference type="InterPro" id="IPR008258">
    <property type="entry name" value="Transglycosylase_SLT_dom_1"/>
</dbReference>
<dbReference type="NCBIfam" id="NF008670">
    <property type="entry name" value="PRK11671.1"/>
    <property type="match status" value="1"/>
</dbReference>
<dbReference type="PANTHER" id="PTHR37423:SF2">
    <property type="entry name" value="MEMBRANE-BOUND LYTIC MUREIN TRANSGLYCOSYLASE C"/>
    <property type="match status" value="1"/>
</dbReference>
<dbReference type="PANTHER" id="PTHR37423">
    <property type="entry name" value="SOLUBLE LYTIC MUREIN TRANSGLYCOSYLASE-RELATED"/>
    <property type="match status" value="1"/>
</dbReference>
<dbReference type="Pfam" id="PF11873">
    <property type="entry name" value="Mltc_N"/>
    <property type="match status" value="1"/>
</dbReference>
<dbReference type="Pfam" id="PF01464">
    <property type="entry name" value="SLT"/>
    <property type="match status" value="1"/>
</dbReference>
<dbReference type="SUPFAM" id="SSF53955">
    <property type="entry name" value="Lysozyme-like"/>
    <property type="match status" value="1"/>
</dbReference>
<dbReference type="PROSITE" id="PS51257">
    <property type="entry name" value="PROKAR_LIPOPROTEIN"/>
    <property type="match status" value="1"/>
</dbReference>
<dbReference type="PROSITE" id="PS00922">
    <property type="entry name" value="TRANSGLYCOSYLASE"/>
    <property type="match status" value="1"/>
</dbReference>
<reference key="1">
    <citation type="journal article" date="2008" name="J. Bacteriol.">
        <title>The pangenome structure of Escherichia coli: comparative genomic analysis of E. coli commensal and pathogenic isolates.</title>
        <authorList>
            <person name="Rasko D.A."/>
            <person name="Rosovitz M.J."/>
            <person name="Myers G.S.A."/>
            <person name="Mongodin E.F."/>
            <person name="Fricke W.F."/>
            <person name="Gajer P."/>
            <person name="Crabtree J."/>
            <person name="Sebaihia M."/>
            <person name="Thomson N.R."/>
            <person name="Chaudhuri R."/>
            <person name="Henderson I.R."/>
            <person name="Sperandio V."/>
            <person name="Ravel J."/>
        </authorList>
    </citation>
    <scope>NUCLEOTIDE SEQUENCE [LARGE SCALE GENOMIC DNA]</scope>
    <source>
        <strain>HS</strain>
    </source>
</reference>
<organism>
    <name type="scientific">Escherichia coli O9:H4 (strain HS)</name>
    <dbReference type="NCBI Taxonomy" id="331112"/>
    <lineage>
        <taxon>Bacteria</taxon>
        <taxon>Pseudomonadati</taxon>
        <taxon>Pseudomonadota</taxon>
        <taxon>Gammaproteobacteria</taxon>
        <taxon>Enterobacterales</taxon>
        <taxon>Enterobacteriaceae</taxon>
        <taxon>Escherichia</taxon>
    </lineage>
</organism>
<evidence type="ECO:0000255" key="1">
    <source>
        <dbReference type="HAMAP-Rule" id="MF_01616"/>
    </source>
</evidence>
<feature type="signal peptide" evidence="1">
    <location>
        <begin position="1"/>
        <end position="16"/>
    </location>
</feature>
<feature type="chain" id="PRO_1000069474" description="Membrane-bound lytic murein transglycosylase C">
    <location>
        <begin position="17"/>
        <end position="359"/>
    </location>
</feature>
<feature type="lipid moiety-binding region" description="N-palmitoyl cysteine" evidence="1">
    <location>
        <position position="17"/>
    </location>
</feature>
<feature type="lipid moiety-binding region" description="S-diacylglycerol cysteine" evidence="1">
    <location>
        <position position="17"/>
    </location>
</feature>
<keyword id="KW-0998">Cell outer membrane</keyword>
<keyword id="KW-0961">Cell wall biogenesis/degradation</keyword>
<keyword id="KW-0449">Lipoprotein</keyword>
<keyword id="KW-0456">Lyase</keyword>
<keyword id="KW-0472">Membrane</keyword>
<keyword id="KW-0564">Palmitate</keyword>
<keyword id="KW-0732">Signal</keyword>
<gene>
    <name evidence="1" type="primary">mltC</name>
    <name type="ordered locus">EcHS_A3124</name>
</gene>
<name>MLTC_ECOHS</name>